<organism>
    <name type="scientific">Solanum tuberosum</name>
    <name type="common">Potato</name>
    <dbReference type="NCBI Taxonomy" id="4113"/>
    <lineage>
        <taxon>Eukaryota</taxon>
        <taxon>Viridiplantae</taxon>
        <taxon>Streptophyta</taxon>
        <taxon>Embryophyta</taxon>
        <taxon>Tracheophyta</taxon>
        <taxon>Spermatophyta</taxon>
        <taxon>Magnoliopsida</taxon>
        <taxon>eudicotyledons</taxon>
        <taxon>Gunneridae</taxon>
        <taxon>Pentapetalae</taxon>
        <taxon>asterids</taxon>
        <taxon>lamiids</taxon>
        <taxon>Solanales</taxon>
        <taxon>Solanaceae</taxon>
        <taxon>Solanoideae</taxon>
        <taxon>Solaneae</taxon>
        <taxon>Solanum</taxon>
    </lineage>
</organism>
<gene>
    <name type="primary">PATB1</name>
</gene>
<proteinExistence type="evidence at transcript level"/>
<reference key="1">
    <citation type="journal article" date="1988" name="Plant Mol. Biol.">
        <title>Molecular cloning and analysis of four potato tuber mRNAs.</title>
        <authorList>
            <person name="Stiekema W.J."/>
            <person name="Heidekamp F."/>
            <person name="Dirkse W.G."/>
            <person name="van Beckum J."/>
            <person name="de Haan P."/>
            <person name="ten Bosch C."/>
            <person name="Louwerse J.D."/>
        </authorList>
        <dbReference type="AGRICOLA" id="IND92000050"/>
    </citation>
    <scope>NUCLEOTIDE SEQUENCE [MRNA]</scope>
    <source>
        <strain>cv. Bintje</strain>
    </source>
</reference>
<feature type="signal peptide">
    <location>
        <begin position="1"/>
        <end position="23"/>
    </location>
</feature>
<feature type="chain" id="PRO_0000032257" description="Patatin-B1">
    <location>
        <begin position="24"/>
        <end position="386"/>
    </location>
</feature>
<feature type="domain" description="PNPLA" evidence="3">
    <location>
        <begin position="32"/>
        <end position="229"/>
    </location>
</feature>
<feature type="short sequence motif" description="GXGXXG" evidence="3">
    <location>
        <begin position="36"/>
        <end position="41"/>
    </location>
</feature>
<feature type="short sequence motif" description="GXSXG" evidence="3">
    <location>
        <begin position="75"/>
        <end position="79"/>
    </location>
</feature>
<feature type="short sequence motif" description="DGA/G" evidence="3">
    <location>
        <begin position="215"/>
        <end position="217"/>
    </location>
</feature>
<feature type="active site" description="Nucleophile" evidence="3">
    <location>
        <position position="77"/>
    </location>
</feature>
<feature type="active site" description="Proton acceptor" evidence="3">
    <location>
        <position position="215"/>
    </location>
</feature>
<feature type="glycosylation site" description="N-linked (GlcNAc...) asparagine" evidence="2">
    <location>
        <position position="115"/>
    </location>
</feature>
<feature type="sequence conflict" description="In Ref. 1; AAA33828." evidence="4" ref="1">
    <original>L</original>
    <variation>M</variation>
    <location>
        <position position="290"/>
    </location>
</feature>
<evidence type="ECO:0000250" key="1"/>
<evidence type="ECO:0000255" key="2"/>
<evidence type="ECO:0000255" key="3">
    <source>
        <dbReference type="PROSITE-ProRule" id="PRU01161"/>
    </source>
</evidence>
<evidence type="ECO:0000305" key="4"/>
<dbReference type="EC" id="3.1.1.-"/>
<dbReference type="EMBL" id="M21879">
    <property type="protein sequence ID" value="AAA33828.1"/>
    <property type="molecule type" value="mRNA"/>
</dbReference>
<dbReference type="EMBL" id="X13179">
    <property type="protein sequence ID" value="CAA31576.1"/>
    <property type="molecule type" value="mRNA"/>
</dbReference>
<dbReference type="PIR" id="B26017">
    <property type="entry name" value="B26017"/>
</dbReference>
<dbReference type="PIR" id="S05593">
    <property type="entry name" value="S05593"/>
</dbReference>
<dbReference type="SMR" id="P15476"/>
<dbReference type="Allergome" id="3489">
    <property type="allergen name" value="Sola t 1.0101"/>
</dbReference>
<dbReference type="Allergome" id="639">
    <property type="allergen name" value="Sola t 1"/>
</dbReference>
<dbReference type="GlyCosmos" id="P15476">
    <property type="glycosylation" value="1 site, No reported glycans"/>
</dbReference>
<dbReference type="InParanoid" id="P15476"/>
<dbReference type="Proteomes" id="UP000011115">
    <property type="component" value="Unassembled WGS sequence"/>
</dbReference>
<dbReference type="GO" id="GO:0005773">
    <property type="term" value="C:vacuole"/>
    <property type="evidence" value="ECO:0007669"/>
    <property type="project" value="UniProtKB-SubCell"/>
</dbReference>
<dbReference type="GO" id="GO:0047372">
    <property type="term" value="F:monoacylglycerol lipase activity"/>
    <property type="evidence" value="ECO:0000318"/>
    <property type="project" value="GO_Central"/>
</dbReference>
<dbReference type="GO" id="GO:0045735">
    <property type="term" value="F:nutrient reservoir activity"/>
    <property type="evidence" value="ECO:0007669"/>
    <property type="project" value="UniProtKB-KW"/>
</dbReference>
<dbReference type="GO" id="GO:0004620">
    <property type="term" value="F:phospholipase activity"/>
    <property type="evidence" value="ECO:0000318"/>
    <property type="project" value="GO_Central"/>
</dbReference>
<dbReference type="GO" id="GO:0006952">
    <property type="term" value="P:defense response"/>
    <property type="evidence" value="ECO:0007669"/>
    <property type="project" value="UniProtKB-KW"/>
</dbReference>
<dbReference type="GO" id="GO:0016042">
    <property type="term" value="P:lipid catabolic process"/>
    <property type="evidence" value="ECO:0007669"/>
    <property type="project" value="UniProtKB-KW"/>
</dbReference>
<dbReference type="Gene3D" id="3.40.1090.10">
    <property type="entry name" value="Cytosolic phospholipase A2 catalytic domain"/>
    <property type="match status" value="1"/>
</dbReference>
<dbReference type="InterPro" id="IPR016035">
    <property type="entry name" value="Acyl_Trfase/lysoPLipase"/>
</dbReference>
<dbReference type="InterPro" id="IPR002641">
    <property type="entry name" value="PNPLA_dom"/>
</dbReference>
<dbReference type="PANTHER" id="PTHR32176:SF85">
    <property type="entry name" value="PATATIN GROUP D-2"/>
    <property type="match status" value="1"/>
</dbReference>
<dbReference type="PANTHER" id="PTHR32176">
    <property type="entry name" value="XYLOSE ISOMERASE"/>
    <property type="match status" value="1"/>
</dbReference>
<dbReference type="Pfam" id="PF01734">
    <property type="entry name" value="Patatin"/>
    <property type="match status" value="1"/>
</dbReference>
<dbReference type="SUPFAM" id="SSF52151">
    <property type="entry name" value="FabD/lysophospholipase-like"/>
    <property type="match status" value="1"/>
</dbReference>
<dbReference type="PROSITE" id="PS51635">
    <property type="entry name" value="PNPLA"/>
    <property type="match status" value="1"/>
</dbReference>
<name>PATB1_SOLTU</name>
<comment type="function">
    <text>Probable lipolytic acyl hydrolase (LAH), an activity which is thought to be involved in the response of tubers to pathogens.</text>
</comment>
<comment type="subcellular location">
    <subcellularLocation>
        <location evidence="1">Vacuole</location>
    </subcellularLocation>
</comment>
<comment type="domain">
    <text>The nitrogen atoms of the two glycine residues in the GGXR motif define the oxyanion hole, and stabilize the oxyanion that forms during the nucleophilic attack by the catalytic serine during substrate cleavage.</text>
</comment>
<comment type="miscellaneous">
    <text>Patatin have a dual role as a somatic storage protein and as an enzyme involved in host resistance. This tuber protein represents approximately 40% of the total protein in mature tubers.</text>
</comment>
<comment type="similarity">
    <text evidence="4">Belongs to the patatin family.</text>
</comment>
<accession>P15476</accession>
<accession>Q41467</accession>
<protein>
    <recommendedName>
        <fullName>Patatin-B1</fullName>
        <ecNumber>3.1.1.-</ecNumber>
    </recommendedName>
</protein>
<keyword id="KW-0325">Glycoprotein</keyword>
<keyword id="KW-0378">Hydrolase</keyword>
<keyword id="KW-0442">Lipid degradation</keyword>
<keyword id="KW-0443">Lipid metabolism</keyword>
<keyword id="KW-0611">Plant defense</keyword>
<keyword id="KW-1185">Reference proteome</keyword>
<keyword id="KW-0732">Signal</keyword>
<keyword id="KW-0758">Storage protein</keyword>
<keyword id="KW-0926">Vacuole</keyword>
<sequence>MATTKSFLILFFMILATTSSTCAKLEEMVTVLSIDGGGIKGIIPAIILEFLEGQLQEVDNNKDARLADYFDVIGGTSTGGLLTAMITTPNENNRPFAAAKDIVPFYFEHGPHIFNYSGSIFGPRYDGKYLLQVLQEKLGETRVHQALTEVAISSFDIKTNKPVIFTKSNLAKSPELDAKMYDICYSIAAAPIYFPPHHFVTHTSNGATYEFNLVDGGVATVGDPALLSLSVATRLAQEDPAFSSIKSLDYKQMLLLSLGTGTNSEFDKTYTAEEAAKWGPLRWMLAIQQLTNAASSYMTDYYISTVFQARHSQNNYLRVQENALTGTTTEMDDASEANMELLVQVGETLLKKPVSKDSPETYEEALKRFAKLLSNRKKLRANKASY</sequence>